<organism>
    <name type="scientific">Yersinia pestis (strain Pestoides F)</name>
    <dbReference type="NCBI Taxonomy" id="386656"/>
    <lineage>
        <taxon>Bacteria</taxon>
        <taxon>Pseudomonadati</taxon>
        <taxon>Pseudomonadota</taxon>
        <taxon>Gammaproteobacteria</taxon>
        <taxon>Enterobacterales</taxon>
        <taxon>Yersiniaceae</taxon>
        <taxon>Yersinia</taxon>
    </lineage>
</organism>
<feature type="signal peptide" evidence="1">
    <location>
        <begin position="1"/>
        <end position="19"/>
    </location>
</feature>
<feature type="chain" id="PRO_1000065829" description="LPS-assembly lipoprotein LptE">
    <location>
        <begin position="20"/>
        <end position="207"/>
    </location>
</feature>
<feature type="region of interest" description="Disordered" evidence="2">
    <location>
        <begin position="168"/>
        <end position="207"/>
    </location>
</feature>
<feature type="compositionally biased region" description="Polar residues" evidence="2">
    <location>
        <begin position="182"/>
        <end position="207"/>
    </location>
</feature>
<feature type="lipid moiety-binding region" description="N-palmitoyl cysteine" evidence="1">
    <location>
        <position position="20"/>
    </location>
</feature>
<feature type="lipid moiety-binding region" description="S-diacylglycerol cysteine" evidence="1">
    <location>
        <position position="20"/>
    </location>
</feature>
<gene>
    <name evidence="1" type="primary">lptE</name>
    <name type="synonym">rlpB</name>
    <name type="ordered locus">YPDSF_2644</name>
</gene>
<protein>
    <recommendedName>
        <fullName evidence="1">LPS-assembly lipoprotein LptE</fullName>
    </recommendedName>
</protein>
<accession>A4TNZ8</accession>
<evidence type="ECO:0000255" key="1">
    <source>
        <dbReference type="HAMAP-Rule" id="MF_01186"/>
    </source>
</evidence>
<evidence type="ECO:0000256" key="2">
    <source>
        <dbReference type="SAM" id="MobiDB-lite"/>
    </source>
</evidence>
<proteinExistence type="inferred from homology"/>
<reference key="1">
    <citation type="submission" date="2007-02" db="EMBL/GenBank/DDBJ databases">
        <title>Complete sequence of chromosome of Yersinia pestis Pestoides F.</title>
        <authorList>
            <consortium name="US DOE Joint Genome Institute"/>
            <person name="Copeland A."/>
            <person name="Lucas S."/>
            <person name="Lapidus A."/>
            <person name="Barry K."/>
            <person name="Detter J.C."/>
            <person name="Glavina del Rio T."/>
            <person name="Hammon N."/>
            <person name="Israni S."/>
            <person name="Dalin E."/>
            <person name="Tice H."/>
            <person name="Pitluck S."/>
            <person name="Di Bartolo G."/>
            <person name="Chain P."/>
            <person name="Malfatti S."/>
            <person name="Shin M."/>
            <person name="Vergez L."/>
            <person name="Schmutz J."/>
            <person name="Larimer F."/>
            <person name="Land M."/>
            <person name="Hauser L."/>
            <person name="Worsham P."/>
            <person name="Chu M."/>
            <person name="Bearden S."/>
            <person name="Garcia E."/>
            <person name="Richardson P."/>
        </authorList>
    </citation>
    <scope>NUCLEOTIDE SEQUENCE [LARGE SCALE GENOMIC DNA]</scope>
    <source>
        <strain>Pestoides F</strain>
    </source>
</reference>
<dbReference type="EMBL" id="CP000668">
    <property type="protein sequence ID" value="ABP41010.1"/>
    <property type="molecule type" value="Genomic_DNA"/>
</dbReference>
<dbReference type="RefSeq" id="WP_002210332.1">
    <property type="nucleotide sequence ID" value="NZ_CP009715.1"/>
</dbReference>
<dbReference type="SMR" id="A4TNZ8"/>
<dbReference type="GeneID" id="57976086"/>
<dbReference type="KEGG" id="ypp:YPDSF_2644"/>
<dbReference type="PATRIC" id="fig|386656.14.peg.4171"/>
<dbReference type="GO" id="GO:0009279">
    <property type="term" value="C:cell outer membrane"/>
    <property type="evidence" value="ECO:0007669"/>
    <property type="project" value="UniProtKB-SubCell"/>
</dbReference>
<dbReference type="GO" id="GO:1990351">
    <property type="term" value="C:transporter complex"/>
    <property type="evidence" value="ECO:0007669"/>
    <property type="project" value="TreeGrafter"/>
</dbReference>
<dbReference type="GO" id="GO:0001530">
    <property type="term" value="F:lipopolysaccharide binding"/>
    <property type="evidence" value="ECO:0007669"/>
    <property type="project" value="TreeGrafter"/>
</dbReference>
<dbReference type="GO" id="GO:0043165">
    <property type="term" value="P:Gram-negative-bacterium-type cell outer membrane assembly"/>
    <property type="evidence" value="ECO:0007669"/>
    <property type="project" value="UniProtKB-UniRule"/>
</dbReference>
<dbReference type="GO" id="GO:0015920">
    <property type="term" value="P:lipopolysaccharide transport"/>
    <property type="evidence" value="ECO:0007669"/>
    <property type="project" value="TreeGrafter"/>
</dbReference>
<dbReference type="Gene3D" id="3.30.160.150">
    <property type="entry name" value="Lipoprotein like domain"/>
    <property type="match status" value="1"/>
</dbReference>
<dbReference type="HAMAP" id="MF_01186">
    <property type="entry name" value="LPS_assembly_LptE"/>
    <property type="match status" value="1"/>
</dbReference>
<dbReference type="InterPro" id="IPR007485">
    <property type="entry name" value="LPS_assembly_LptE"/>
</dbReference>
<dbReference type="NCBIfam" id="NF008062">
    <property type="entry name" value="PRK10796.1"/>
    <property type="match status" value="1"/>
</dbReference>
<dbReference type="PANTHER" id="PTHR38098">
    <property type="entry name" value="LPS-ASSEMBLY LIPOPROTEIN LPTE"/>
    <property type="match status" value="1"/>
</dbReference>
<dbReference type="PANTHER" id="PTHR38098:SF1">
    <property type="entry name" value="LPS-ASSEMBLY LIPOPROTEIN LPTE"/>
    <property type="match status" value="1"/>
</dbReference>
<dbReference type="Pfam" id="PF04390">
    <property type="entry name" value="LptE"/>
    <property type="match status" value="1"/>
</dbReference>
<dbReference type="PROSITE" id="PS51257">
    <property type="entry name" value="PROKAR_LIPOPROTEIN"/>
    <property type="match status" value="1"/>
</dbReference>
<name>LPTE_YERPP</name>
<comment type="function">
    <text evidence="1">Together with LptD, is involved in the assembly of lipopolysaccharide (LPS) at the surface of the outer membrane. Required for the proper assembly of LptD. Binds LPS and may serve as the LPS recognition site at the outer membrane.</text>
</comment>
<comment type="subunit">
    <text evidence="1">Component of the lipopolysaccharide transport and assembly complex. Interacts with LptD.</text>
</comment>
<comment type="subcellular location">
    <subcellularLocation>
        <location evidence="1">Cell outer membrane</location>
        <topology evidence="1">Lipid-anchor</topology>
    </subcellularLocation>
</comment>
<comment type="similarity">
    <text evidence="1">Belongs to the LptE lipoprotein family.</text>
</comment>
<sequence>MRHRILTLLLGLAVLVTAGCGFNLRGTTQVPTELQKLLLESSDPYGPLARSIRQQLRLNNVTIVDDAMRKDIPTLRIIGSSESQETVSIFRNGVAAENQLVLHVQAQVLIPGHDIYPLQVNVFRTFFDNPLTALAKEAEAEVLRQEMREQAAQQLVRQLLTVHAAEVKNTQKNGDKPVSDANAAQGSTPTAVNETTLGEPAVSTSAK</sequence>
<keyword id="KW-0998">Cell outer membrane</keyword>
<keyword id="KW-0449">Lipoprotein</keyword>
<keyword id="KW-0472">Membrane</keyword>
<keyword id="KW-0564">Palmitate</keyword>
<keyword id="KW-0732">Signal</keyword>